<comment type="function">
    <text evidence="1">Quinone reductase that provides resistance to thiol-specific stress caused by electrophilic quinones.</text>
</comment>
<comment type="function">
    <text evidence="1">Also exhibits azoreductase activity. Catalyzes the reductive cleavage of the azo bond in aromatic azo compounds to the corresponding amines.</text>
</comment>
<comment type="catalytic activity">
    <reaction evidence="1">
        <text>2 a quinone + NADH + H(+) = 2 a 1,4-benzosemiquinone + NAD(+)</text>
        <dbReference type="Rhea" id="RHEA:65952"/>
        <dbReference type="ChEBI" id="CHEBI:15378"/>
        <dbReference type="ChEBI" id="CHEBI:57540"/>
        <dbReference type="ChEBI" id="CHEBI:57945"/>
        <dbReference type="ChEBI" id="CHEBI:132124"/>
        <dbReference type="ChEBI" id="CHEBI:134225"/>
    </reaction>
</comment>
<comment type="catalytic activity">
    <reaction evidence="1">
        <text>N,N-dimethyl-1,4-phenylenediamine + anthranilate + 2 NAD(+) = 2-(4-dimethylaminophenyl)diazenylbenzoate + 2 NADH + 2 H(+)</text>
        <dbReference type="Rhea" id="RHEA:55872"/>
        <dbReference type="ChEBI" id="CHEBI:15378"/>
        <dbReference type="ChEBI" id="CHEBI:15783"/>
        <dbReference type="ChEBI" id="CHEBI:16567"/>
        <dbReference type="ChEBI" id="CHEBI:57540"/>
        <dbReference type="ChEBI" id="CHEBI:57945"/>
        <dbReference type="ChEBI" id="CHEBI:71579"/>
        <dbReference type="EC" id="1.7.1.17"/>
    </reaction>
</comment>
<comment type="cofactor">
    <cofactor evidence="1">
        <name>FMN</name>
        <dbReference type="ChEBI" id="CHEBI:58210"/>
    </cofactor>
    <text evidence="1">Binds 1 FMN per subunit.</text>
</comment>
<comment type="subunit">
    <text evidence="1">Homodimer.</text>
</comment>
<comment type="similarity">
    <text evidence="1">Belongs to the azoreductase type 1 family.</text>
</comment>
<keyword id="KW-0285">Flavoprotein</keyword>
<keyword id="KW-0288">FMN</keyword>
<keyword id="KW-0520">NAD</keyword>
<keyword id="KW-0560">Oxidoreductase</keyword>
<dbReference type="EC" id="1.6.5.-" evidence="1"/>
<dbReference type="EC" id="1.7.1.17" evidence="1"/>
<dbReference type="EMBL" id="CP000444">
    <property type="protein sequence ID" value="ABI44683.1"/>
    <property type="molecule type" value="Genomic_DNA"/>
</dbReference>
<dbReference type="SMR" id="Q0HQC2"/>
<dbReference type="KEGG" id="shm:Shewmr7_3703"/>
<dbReference type="HOGENOM" id="CLU_088964_0_0_6"/>
<dbReference type="GO" id="GO:0009055">
    <property type="term" value="F:electron transfer activity"/>
    <property type="evidence" value="ECO:0007669"/>
    <property type="project" value="UniProtKB-UniRule"/>
</dbReference>
<dbReference type="GO" id="GO:0010181">
    <property type="term" value="F:FMN binding"/>
    <property type="evidence" value="ECO:0007669"/>
    <property type="project" value="UniProtKB-UniRule"/>
</dbReference>
<dbReference type="GO" id="GO:0016652">
    <property type="term" value="F:oxidoreductase activity, acting on NAD(P)H as acceptor"/>
    <property type="evidence" value="ECO:0007669"/>
    <property type="project" value="UniProtKB-UniRule"/>
</dbReference>
<dbReference type="GO" id="GO:0016655">
    <property type="term" value="F:oxidoreductase activity, acting on NAD(P)H, quinone or similar compound as acceptor"/>
    <property type="evidence" value="ECO:0007669"/>
    <property type="project" value="InterPro"/>
</dbReference>
<dbReference type="Gene3D" id="3.40.50.360">
    <property type="match status" value="1"/>
</dbReference>
<dbReference type="HAMAP" id="MF_01216">
    <property type="entry name" value="Azoreductase_type1"/>
    <property type="match status" value="1"/>
</dbReference>
<dbReference type="InterPro" id="IPR003680">
    <property type="entry name" value="Flavodoxin_fold"/>
</dbReference>
<dbReference type="InterPro" id="IPR029039">
    <property type="entry name" value="Flavoprotein-like_sf"/>
</dbReference>
<dbReference type="InterPro" id="IPR050104">
    <property type="entry name" value="FMN-dep_NADH:Q_OxRdtase_AzoR1"/>
</dbReference>
<dbReference type="InterPro" id="IPR023048">
    <property type="entry name" value="NADH:quinone_OxRdtase_FMN_depd"/>
</dbReference>
<dbReference type="PANTHER" id="PTHR43741">
    <property type="entry name" value="FMN-DEPENDENT NADH-AZOREDUCTASE 1"/>
    <property type="match status" value="1"/>
</dbReference>
<dbReference type="PANTHER" id="PTHR43741:SF2">
    <property type="entry name" value="FMN-DEPENDENT NADH:QUINONE OXIDOREDUCTASE"/>
    <property type="match status" value="1"/>
</dbReference>
<dbReference type="Pfam" id="PF02525">
    <property type="entry name" value="Flavodoxin_2"/>
    <property type="match status" value="1"/>
</dbReference>
<dbReference type="SUPFAM" id="SSF52218">
    <property type="entry name" value="Flavoproteins"/>
    <property type="match status" value="1"/>
</dbReference>
<organism>
    <name type="scientific">Shewanella sp. (strain MR-7)</name>
    <dbReference type="NCBI Taxonomy" id="60481"/>
    <lineage>
        <taxon>Bacteria</taxon>
        <taxon>Pseudomonadati</taxon>
        <taxon>Pseudomonadota</taxon>
        <taxon>Gammaproteobacteria</taxon>
        <taxon>Alteromonadales</taxon>
        <taxon>Shewanellaceae</taxon>
        <taxon>Shewanella</taxon>
    </lineage>
</organism>
<protein>
    <recommendedName>
        <fullName evidence="1">FMN-dependent NADH:quinone oxidoreductase</fullName>
        <ecNumber evidence="1">1.6.5.-</ecNumber>
    </recommendedName>
    <alternativeName>
        <fullName evidence="1">Azo-dye reductase</fullName>
    </alternativeName>
    <alternativeName>
        <fullName evidence="1">FMN-dependent NADH-azo compound oxidoreductase</fullName>
    </alternativeName>
    <alternativeName>
        <fullName evidence="1">FMN-dependent NADH-azoreductase</fullName>
        <ecNumber evidence="1">1.7.1.17</ecNumber>
    </alternativeName>
</protein>
<proteinExistence type="inferred from homology"/>
<evidence type="ECO:0000255" key="1">
    <source>
        <dbReference type="HAMAP-Rule" id="MF_01216"/>
    </source>
</evidence>
<accession>Q0HQC2</accession>
<name>AZOR_SHESR</name>
<feature type="chain" id="PRO_1000066528" description="FMN-dependent NADH:quinone oxidoreductase">
    <location>
        <begin position="1"/>
        <end position="198"/>
    </location>
</feature>
<feature type="binding site" evidence="1">
    <location>
        <position position="10"/>
    </location>
    <ligand>
        <name>FMN</name>
        <dbReference type="ChEBI" id="CHEBI:58210"/>
    </ligand>
</feature>
<feature type="binding site" evidence="1">
    <location>
        <begin position="16"/>
        <end position="18"/>
    </location>
    <ligand>
        <name>FMN</name>
        <dbReference type="ChEBI" id="CHEBI:58210"/>
    </ligand>
</feature>
<feature type="binding site" evidence="1">
    <location>
        <begin position="94"/>
        <end position="97"/>
    </location>
    <ligand>
        <name>FMN</name>
        <dbReference type="ChEBI" id="CHEBI:58210"/>
    </ligand>
</feature>
<feature type="binding site" evidence="1">
    <location>
        <begin position="138"/>
        <end position="141"/>
    </location>
    <ligand>
        <name>FMN</name>
        <dbReference type="ChEBI" id="CHEBI:58210"/>
    </ligand>
</feature>
<reference key="1">
    <citation type="submission" date="2006-08" db="EMBL/GenBank/DDBJ databases">
        <title>Complete sequence of chromosome 1 of Shewanella sp. MR-7.</title>
        <authorList>
            <person name="Copeland A."/>
            <person name="Lucas S."/>
            <person name="Lapidus A."/>
            <person name="Barry K."/>
            <person name="Detter J.C."/>
            <person name="Glavina del Rio T."/>
            <person name="Hammon N."/>
            <person name="Israni S."/>
            <person name="Dalin E."/>
            <person name="Tice H."/>
            <person name="Pitluck S."/>
            <person name="Kiss H."/>
            <person name="Brettin T."/>
            <person name="Bruce D."/>
            <person name="Han C."/>
            <person name="Tapia R."/>
            <person name="Gilna P."/>
            <person name="Schmutz J."/>
            <person name="Larimer F."/>
            <person name="Land M."/>
            <person name="Hauser L."/>
            <person name="Kyrpides N."/>
            <person name="Mikhailova N."/>
            <person name="Nealson K."/>
            <person name="Konstantinidis K."/>
            <person name="Klappenbach J."/>
            <person name="Tiedje J."/>
            <person name="Richardson P."/>
        </authorList>
    </citation>
    <scope>NUCLEOTIDE SEQUENCE [LARGE SCALE GENOMIC DNA]</scope>
    <source>
        <strain>MR-7</strain>
    </source>
</reference>
<gene>
    <name evidence="1" type="primary">azoR</name>
    <name type="ordered locus">Shewmr7_3703</name>
</gene>
<sequence>MSKVLVLKSSILGGYSQSALLVDHLIGKWEDQGATITVRDLAGKDVLPMVDGEIASGLRGGDDLTARQQEMLDLSNALVEELKANDTIVITAPMYNFNIPTQLKNWIDFVARAGVTFTYTENGPKGLVEGKRAVLITTRGGAHKDGPTDHIVPFLKTFLGFIGITDVEVVYGEALNMGPEANQKGISEAKQSLDALTV</sequence>